<comment type="function">
    <text evidence="1">Specifically methylates the uridine in position 2552 of 23S rRNA at the 2'-O position of the ribose in the fully assembled 50S ribosomal subunit.</text>
</comment>
<comment type="catalytic activity">
    <reaction evidence="1">
        <text>uridine(2552) in 23S rRNA + S-adenosyl-L-methionine = 2'-O-methyluridine(2552) in 23S rRNA + S-adenosyl-L-homocysteine + H(+)</text>
        <dbReference type="Rhea" id="RHEA:42720"/>
        <dbReference type="Rhea" id="RHEA-COMP:10202"/>
        <dbReference type="Rhea" id="RHEA-COMP:10203"/>
        <dbReference type="ChEBI" id="CHEBI:15378"/>
        <dbReference type="ChEBI" id="CHEBI:57856"/>
        <dbReference type="ChEBI" id="CHEBI:59789"/>
        <dbReference type="ChEBI" id="CHEBI:65315"/>
        <dbReference type="ChEBI" id="CHEBI:74478"/>
        <dbReference type="EC" id="2.1.1.166"/>
    </reaction>
</comment>
<comment type="subcellular location">
    <subcellularLocation>
        <location evidence="1">Cytoplasm</location>
    </subcellularLocation>
</comment>
<comment type="similarity">
    <text evidence="1">Belongs to the class I-like SAM-binding methyltransferase superfamily. RNA methyltransferase RlmE family.</text>
</comment>
<feature type="chain" id="PRO_1000087723" description="Ribosomal RNA large subunit methyltransferase E">
    <location>
        <begin position="1"/>
        <end position="209"/>
    </location>
</feature>
<feature type="active site" description="Proton acceptor" evidence="1">
    <location>
        <position position="164"/>
    </location>
</feature>
<feature type="binding site" evidence="1">
    <location>
        <position position="63"/>
    </location>
    <ligand>
        <name>S-adenosyl-L-methionine</name>
        <dbReference type="ChEBI" id="CHEBI:59789"/>
    </ligand>
</feature>
<feature type="binding site" evidence="1">
    <location>
        <position position="65"/>
    </location>
    <ligand>
        <name>S-adenosyl-L-methionine</name>
        <dbReference type="ChEBI" id="CHEBI:59789"/>
    </ligand>
</feature>
<feature type="binding site" evidence="1">
    <location>
        <position position="83"/>
    </location>
    <ligand>
        <name>S-adenosyl-L-methionine</name>
        <dbReference type="ChEBI" id="CHEBI:59789"/>
    </ligand>
</feature>
<feature type="binding site" evidence="1">
    <location>
        <position position="99"/>
    </location>
    <ligand>
        <name>S-adenosyl-L-methionine</name>
        <dbReference type="ChEBI" id="CHEBI:59789"/>
    </ligand>
</feature>
<feature type="binding site" evidence="1">
    <location>
        <position position="124"/>
    </location>
    <ligand>
        <name>S-adenosyl-L-methionine</name>
        <dbReference type="ChEBI" id="CHEBI:59789"/>
    </ligand>
</feature>
<evidence type="ECO:0000255" key="1">
    <source>
        <dbReference type="HAMAP-Rule" id="MF_01547"/>
    </source>
</evidence>
<proteinExistence type="inferred from homology"/>
<organism>
    <name type="scientific">Yersinia pseudotuberculosis serotype O:1b (strain IP 31758)</name>
    <dbReference type="NCBI Taxonomy" id="349747"/>
    <lineage>
        <taxon>Bacteria</taxon>
        <taxon>Pseudomonadati</taxon>
        <taxon>Pseudomonadota</taxon>
        <taxon>Gammaproteobacteria</taxon>
        <taxon>Enterobacterales</taxon>
        <taxon>Yersiniaceae</taxon>
        <taxon>Yersinia</taxon>
    </lineage>
</organism>
<gene>
    <name evidence="1" type="primary">rlmE</name>
    <name evidence="1" type="synonym">ftsJ</name>
    <name evidence="1" type="synonym">rrmJ</name>
    <name type="ordered locus">YpsIP31758_3603</name>
</gene>
<accession>A7FMS9</accession>
<keyword id="KW-0963">Cytoplasm</keyword>
<keyword id="KW-0489">Methyltransferase</keyword>
<keyword id="KW-0698">rRNA processing</keyword>
<keyword id="KW-0949">S-adenosyl-L-methionine</keyword>
<keyword id="KW-0808">Transferase</keyword>
<reference key="1">
    <citation type="journal article" date="2007" name="PLoS Genet.">
        <title>The complete genome sequence of Yersinia pseudotuberculosis IP31758, the causative agent of Far East scarlet-like fever.</title>
        <authorList>
            <person name="Eppinger M."/>
            <person name="Rosovitz M.J."/>
            <person name="Fricke W.F."/>
            <person name="Rasko D.A."/>
            <person name="Kokorina G."/>
            <person name="Fayolle C."/>
            <person name="Lindler L.E."/>
            <person name="Carniel E."/>
            <person name="Ravel J."/>
        </authorList>
    </citation>
    <scope>NUCLEOTIDE SEQUENCE [LARGE SCALE GENOMIC DNA]</scope>
    <source>
        <strain>IP 31758</strain>
    </source>
</reference>
<dbReference type="EC" id="2.1.1.166" evidence="1"/>
<dbReference type="EMBL" id="CP000720">
    <property type="protein sequence ID" value="ABS49411.1"/>
    <property type="molecule type" value="Genomic_DNA"/>
</dbReference>
<dbReference type="RefSeq" id="WP_002228196.1">
    <property type="nucleotide sequence ID" value="NC_009708.1"/>
</dbReference>
<dbReference type="SMR" id="A7FMS9"/>
<dbReference type="GeneID" id="57975211"/>
<dbReference type="KEGG" id="ypi:YpsIP31758_3603"/>
<dbReference type="HOGENOM" id="CLU_009422_4_0_6"/>
<dbReference type="Proteomes" id="UP000002412">
    <property type="component" value="Chromosome"/>
</dbReference>
<dbReference type="GO" id="GO:0005737">
    <property type="term" value="C:cytoplasm"/>
    <property type="evidence" value="ECO:0007669"/>
    <property type="project" value="UniProtKB-SubCell"/>
</dbReference>
<dbReference type="GO" id="GO:0008650">
    <property type="term" value="F:rRNA (uridine-2'-O-)-methyltransferase activity"/>
    <property type="evidence" value="ECO:0007669"/>
    <property type="project" value="UniProtKB-UniRule"/>
</dbReference>
<dbReference type="FunFam" id="3.40.50.150:FF:000005">
    <property type="entry name" value="Ribosomal RNA large subunit methyltransferase E"/>
    <property type="match status" value="1"/>
</dbReference>
<dbReference type="Gene3D" id="3.40.50.150">
    <property type="entry name" value="Vaccinia Virus protein VP39"/>
    <property type="match status" value="1"/>
</dbReference>
<dbReference type="HAMAP" id="MF_01547">
    <property type="entry name" value="RNA_methyltr_E"/>
    <property type="match status" value="1"/>
</dbReference>
<dbReference type="InterPro" id="IPR050082">
    <property type="entry name" value="RNA_methyltr_RlmE"/>
</dbReference>
<dbReference type="InterPro" id="IPR002877">
    <property type="entry name" value="RNA_MeTrfase_FtsJ_dom"/>
</dbReference>
<dbReference type="InterPro" id="IPR015507">
    <property type="entry name" value="rRNA-MeTfrase_E"/>
</dbReference>
<dbReference type="InterPro" id="IPR004512">
    <property type="entry name" value="rRNA_MeTrfase_gammaproteobac"/>
</dbReference>
<dbReference type="InterPro" id="IPR029063">
    <property type="entry name" value="SAM-dependent_MTases_sf"/>
</dbReference>
<dbReference type="NCBIfam" id="NF008390">
    <property type="entry name" value="PRK11188.1"/>
    <property type="match status" value="1"/>
</dbReference>
<dbReference type="NCBIfam" id="TIGR00438">
    <property type="entry name" value="rrmJ"/>
    <property type="match status" value="1"/>
</dbReference>
<dbReference type="PANTHER" id="PTHR10920">
    <property type="entry name" value="RIBOSOMAL RNA METHYLTRANSFERASE"/>
    <property type="match status" value="1"/>
</dbReference>
<dbReference type="PANTHER" id="PTHR10920:SF18">
    <property type="entry name" value="RRNA METHYLTRANSFERASE 2, MITOCHONDRIAL"/>
    <property type="match status" value="1"/>
</dbReference>
<dbReference type="Pfam" id="PF01728">
    <property type="entry name" value="FtsJ"/>
    <property type="match status" value="1"/>
</dbReference>
<dbReference type="PIRSF" id="PIRSF005461">
    <property type="entry name" value="23S_rRNA_mtase"/>
    <property type="match status" value="1"/>
</dbReference>
<dbReference type="SUPFAM" id="SSF53335">
    <property type="entry name" value="S-adenosyl-L-methionine-dependent methyltransferases"/>
    <property type="match status" value="1"/>
</dbReference>
<name>RLME_YERP3</name>
<sequence>MSNKKRSASSSRWLQEHFSDKYVIQAQKKGLRSRAWFKLDEIQQSDKLFKQGMTVVDLGAAPGGWSQYAVTQIGSKGRVIACDLLPMDPIVGVDFLQGDFRDELVLKALLERVGDKKVQVVMCDMAPNMSGTPAVDIPKSMYLVELALDMCRDVLAPGGSFLVKVFQGDGFDEYLREIRSLFTKVKIRKPDASRARSREVYIVATGRKL</sequence>
<protein>
    <recommendedName>
        <fullName evidence="1">Ribosomal RNA large subunit methyltransferase E</fullName>
        <ecNumber evidence="1">2.1.1.166</ecNumber>
    </recommendedName>
    <alternativeName>
        <fullName evidence="1">23S rRNA Um2552 methyltransferase</fullName>
    </alternativeName>
    <alternativeName>
        <fullName evidence="1">rRNA (uridine-2'-O-)-methyltransferase</fullName>
    </alternativeName>
</protein>